<keyword id="KW-1003">Cell membrane</keyword>
<keyword id="KW-0472">Membrane</keyword>
<keyword id="KW-1185">Reference proteome</keyword>
<keyword id="KW-0812">Transmembrane</keyword>
<keyword id="KW-1133">Transmembrane helix</keyword>
<gene>
    <name type="primary">yjiH</name>
    <name type="ordered locus">b4330</name>
    <name type="ordered locus">JW5783</name>
</gene>
<accession>P39379</accession>
<accession>Q2M5Y3</accession>
<name>YJIH_ECOLI</name>
<sequence>MTQQGDAVAGELATEKVGIKGYLAFFLTIIFFSGVFSGTDSWWRVFDFSVLNGSFGQLPGANGATTSFRGAGGAGAKDGFLFALELAPSVILSLGIISITDGLGGLRAAQQLMTPVLKPLLGIPGICSLALIANLQNTDAAAGMTKELAQEGEITERDKVIFAAYQTSGSAIITNYFSSGVAVFAFLGTSVIVPLAVILVFKFVGANILRVWLNFEERRNPTQGAQA</sequence>
<reference key="1">
    <citation type="journal article" date="1995" name="Nucleic Acids Res.">
        <title>Analysis of the Escherichia coli genome VI: DNA sequence of the region from 92.8 through 100 minutes.</title>
        <authorList>
            <person name="Burland V.D."/>
            <person name="Plunkett G. III"/>
            <person name="Sofia H.J."/>
            <person name="Daniels D.L."/>
            <person name="Blattner F.R."/>
        </authorList>
    </citation>
    <scope>NUCLEOTIDE SEQUENCE [LARGE SCALE GENOMIC DNA]</scope>
    <source>
        <strain>K12 / MG1655 / ATCC 47076</strain>
    </source>
</reference>
<reference key="2">
    <citation type="journal article" date="1997" name="Science">
        <title>The complete genome sequence of Escherichia coli K-12.</title>
        <authorList>
            <person name="Blattner F.R."/>
            <person name="Plunkett G. III"/>
            <person name="Bloch C.A."/>
            <person name="Perna N.T."/>
            <person name="Burland V."/>
            <person name="Riley M."/>
            <person name="Collado-Vides J."/>
            <person name="Glasner J.D."/>
            <person name="Rode C.K."/>
            <person name="Mayhew G.F."/>
            <person name="Gregor J."/>
            <person name="Davis N.W."/>
            <person name="Kirkpatrick H.A."/>
            <person name="Goeden M.A."/>
            <person name="Rose D.J."/>
            <person name="Mau B."/>
            <person name="Shao Y."/>
        </authorList>
    </citation>
    <scope>NUCLEOTIDE SEQUENCE [LARGE SCALE GENOMIC DNA]</scope>
    <source>
        <strain>K12 / MG1655 / ATCC 47076</strain>
    </source>
</reference>
<reference key="3">
    <citation type="journal article" date="2006" name="Mol. Syst. Biol.">
        <title>Highly accurate genome sequences of Escherichia coli K-12 strains MG1655 and W3110.</title>
        <authorList>
            <person name="Hayashi K."/>
            <person name="Morooka N."/>
            <person name="Yamamoto Y."/>
            <person name="Fujita K."/>
            <person name="Isono K."/>
            <person name="Choi S."/>
            <person name="Ohtsubo E."/>
            <person name="Baba T."/>
            <person name="Wanner B.L."/>
            <person name="Mori H."/>
            <person name="Horiuchi T."/>
        </authorList>
    </citation>
    <scope>NUCLEOTIDE SEQUENCE [LARGE SCALE GENOMIC DNA]</scope>
    <source>
        <strain>K12 / W3110 / ATCC 27325 / DSM 5911</strain>
    </source>
</reference>
<protein>
    <recommendedName>
        <fullName>Uncharacterized protein YjiH</fullName>
    </recommendedName>
</protein>
<feature type="chain" id="PRO_0000169788" description="Uncharacterized protein YjiH">
    <location>
        <begin position="1"/>
        <end position="227"/>
    </location>
</feature>
<feature type="transmembrane region" description="Helical" evidence="1">
    <location>
        <begin position="17"/>
        <end position="37"/>
    </location>
</feature>
<feature type="transmembrane region" description="Helical" evidence="1">
    <location>
        <begin position="79"/>
        <end position="99"/>
    </location>
</feature>
<feature type="transmembrane region" description="Helical" evidence="1">
    <location>
        <begin position="112"/>
        <end position="132"/>
    </location>
</feature>
<feature type="transmembrane region" description="Helical" evidence="1">
    <location>
        <begin position="181"/>
        <end position="201"/>
    </location>
</feature>
<organism>
    <name type="scientific">Escherichia coli (strain K12)</name>
    <dbReference type="NCBI Taxonomy" id="83333"/>
    <lineage>
        <taxon>Bacteria</taxon>
        <taxon>Pseudomonadati</taxon>
        <taxon>Pseudomonadota</taxon>
        <taxon>Gammaproteobacteria</taxon>
        <taxon>Enterobacterales</taxon>
        <taxon>Enterobacteriaceae</taxon>
        <taxon>Escherichia</taxon>
    </lineage>
</organism>
<comment type="subcellular location">
    <subcellularLocation>
        <location evidence="2">Cell membrane</location>
        <topology evidence="2">Multi-pass membrane protein</topology>
    </subcellularLocation>
</comment>
<comment type="sequence caution" evidence="2">
    <conflict type="erroneous initiation">
        <sequence resource="EMBL-CDS" id="AAA97226"/>
    </conflict>
    <text>Extended N-terminus.</text>
</comment>
<proteinExistence type="predicted"/>
<dbReference type="EMBL" id="U14003">
    <property type="protein sequence ID" value="AAA97226.1"/>
    <property type="status" value="ALT_INIT"/>
    <property type="molecule type" value="Genomic_DNA"/>
</dbReference>
<dbReference type="EMBL" id="U00096">
    <property type="protein sequence ID" value="AAC77286.2"/>
    <property type="molecule type" value="Genomic_DNA"/>
</dbReference>
<dbReference type="EMBL" id="AP009048">
    <property type="protein sequence ID" value="BAE78323.1"/>
    <property type="molecule type" value="Genomic_DNA"/>
</dbReference>
<dbReference type="RefSeq" id="NP_418750.2">
    <property type="nucleotide sequence ID" value="NC_000913.3"/>
</dbReference>
<dbReference type="RefSeq" id="WP_001295597.1">
    <property type="nucleotide sequence ID" value="NZ_STEB01000025.1"/>
</dbReference>
<dbReference type="BioGRID" id="4261262">
    <property type="interactions" value="9"/>
</dbReference>
<dbReference type="FunCoup" id="P39379">
    <property type="interactions" value="43"/>
</dbReference>
<dbReference type="STRING" id="511145.b4330"/>
<dbReference type="TCDB" id="9.A.5.4.2">
    <property type="family name" value="the putative arginine transporter (argw) family"/>
</dbReference>
<dbReference type="jPOST" id="P39379"/>
<dbReference type="PaxDb" id="511145-b4330"/>
<dbReference type="EnsemblBacteria" id="AAC77286">
    <property type="protein sequence ID" value="AAC77286"/>
    <property type="gene ID" value="b4330"/>
</dbReference>
<dbReference type="GeneID" id="948856"/>
<dbReference type="KEGG" id="ecj:JW5783"/>
<dbReference type="KEGG" id="eco:b4330"/>
<dbReference type="KEGG" id="ecoc:C3026_23405"/>
<dbReference type="PATRIC" id="fig|1411691.4.peg.2359"/>
<dbReference type="EchoBASE" id="EB2457"/>
<dbReference type="eggNOG" id="COG3366">
    <property type="taxonomic scope" value="Bacteria"/>
</dbReference>
<dbReference type="HOGENOM" id="CLU_081837_0_0_6"/>
<dbReference type="InParanoid" id="P39379"/>
<dbReference type="OMA" id="KVEGMAW"/>
<dbReference type="OrthoDB" id="5339657at2"/>
<dbReference type="PhylomeDB" id="P39379"/>
<dbReference type="BioCyc" id="EcoCyc:G7927-MONOMER"/>
<dbReference type="PRO" id="PR:P39379"/>
<dbReference type="Proteomes" id="UP000000625">
    <property type="component" value="Chromosome"/>
</dbReference>
<dbReference type="GO" id="GO:0005886">
    <property type="term" value="C:plasma membrane"/>
    <property type="evidence" value="ECO:0000314"/>
    <property type="project" value="EcoCyc"/>
</dbReference>
<dbReference type="InterPro" id="IPR011642">
    <property type="entry name" value="Gate_dom"/>
</dbReference>
<dbReference type="Pfam" id="PF07670">
    <property type="entry name" value="Gate"/>
    <property type="match status" value="1"/>
</dbReference>
<evidence type="ECO:0000255" key="1"/>
<evidence type="ECO:0000305" key="2"/>